<feature type="signal peptide" evidence="2">
    <location>
        <begin position="1"/>
        <end position="13"/>
    </location>
</feature>
<feature type="chain" id="PRO_0000015438" description="Interleukin-1 receptor type 2, membrane form">
    <location>
        <begin position="14"/>
        <end position="393"/>
    </location>
</feature>
<feature type="chain" id="PRO_0000415347" description="Interleukin-1 receptor type 2, soluble form">
    <location>
        <begin position="14"/>
        <end status="unknown"/>
    </location>
</feature>
<feature type="topological domain" description="Extracellular" evidence="2">
    <location>
        <begin position="14"/>
        <end position="347"/>
    </location>
</feature>
<feature type="transmembrane region" description="Helical" evidence="2">
    <location>
        <begin position="348"/>
        <end position="368"/>
    </location>
</feature>
<feature type="topological domain" description="Cytoplasmic" evidence="2">
    <location>
        <begin position="369"/>
        <end position="393"/>
    </location>
</feature>
<feature type="domain" description="Ig-like C2-type 1">
    <location>
        <begin position="29"/>
        <end position="120"/>
    </location>
</feature>
<feature type="domain" description="Ig-like C2-type 2">
    <location>
        <begin position="134"/>
        <end position="221"/>
    </location>
</feature>
<feature type="domain" description="Ig-like C2-type 3">
    <location>
        <begin position="237"/>
        <end position="342"/>
    </location>
</feature>
<feature type="glycosylation site" description="N-linked (GlcNAc...) asparagine" evidence="2">
    <location>
        <position position="66"/>
    </location>
</feature>
<feature type="glycosylation site" description="N-linked (GlcNAc...) asparagine" evidence="2">
    <location>
        <position position="72"/>
    </location>
</feature>
<feature type="glycosylation site" description="N-linked (GlcNAc...) asparagine" evidence="2">
    <location>
        <position position="112"/>
    </location>
</feature>
<feature type="glycosylation site" description="N-linked (GlcNAc...) asparagine" evidence="2">
    <location>
        <position position="219"/>
    </location>
</feature>
<feature type="glycosylation site" description="N-linked (GlcNAc...) asparagine" evidence="2">
    <location>
        <position position="277"/>
    </location>
</feature>
<feature type="disulfide bond" evidence="3">
    <location>
        <begin position="28"/>
        <end position="116"/>
    </location>
</feature>
<feature type="disulfide bond" evidence="3">
    <location>
        <begin position="50"/>
        <end position="108"/>
    </location>
</feature>
<feature type="disulfide bond" evidence="3">
    <location>
        <begin position="152"/>
        <end position="207"/>
    </location>
</feature>
<feature type="disulfide bond" evidence="3">
    <location>
        <begin position="258"/>
        <end position="326"/>
    </location>
</feature>
<feature type="splice variant" id="VSP_002663" description="In isoform Short." evidence="4">
    <location>
        <begin position="297"/>
        <end position="393"/>
    </location>
</feature>
<reference key="1">
    <citation type="journal article" date="1996" name="J. Biol. Chem.">
        <title>Cloning and characterization of an alternatively processed human type II interleukin-1 receptor mRNA.</title>
        <authorList>
            <person name="Liu C."/>
            <person name="Hart R.P."/>
            <person name="Liu X.J."/>
            <person name="Clevenger W."/>
            <person name="Maki R.A."/>
            <person name="Souza E.B."/>
        </authorList>
    </citation>
    <scope>NUCLEOTIDE SEQUENCE [MRNA] (ISOFORMS LONG AND SHORT)</scope>
    <scope>PROTEIN SEQUENCE OF 125-145</scope>
</reference>
<gene>
    <name type="primary">IL1R2</name>
    <name type="synonym">IL1RB</name>
</gene>
<protein>
    <recommendedName>
        <fullName>Interleukin-1 receptor type 2</fullName>
        <shortName>IL-1R-2</shortName>
        <shortName>IL-1RT-2</shortName>
        <shortName>IL-1RT2</shortName>
    </recommendedName>
    <alternativeName>
        <fullName>CD121 antigen-like family member B</fullName>
    </alternativeName>
    <alternativeName>
        <fullName>IL-1 type II receptor</fullName>
    </alternativeName>
    <alternativeName>
        <fullName>Interleukin-1 receptor beta</fullName>
        <shortName>IL-1R-beta</shortName>
    </alternativeName>
    <alternativeName>
        <fullName>Interleukin-1 receptor type II</fullName>
    </alternativeName>
    <cdAntigenName>CD121b</cdAntigenName>
    <component>
        <recommendedName>
            <fullName>Interleukin-1 receptor type 2, membrane form</fullName>
            <shortName>mIL-1R2</shortName>
            <shortName>mIL-1RII</shortName>
        </recommendedName>
    </component>
    <component>
        <recommendedName>
            <fullName>Interleukin-1 receptor type 2, soluble form</fullName>
            <shortName>sIL-1R2</shortName>
            <shortName>sIL-1RII</shortName>
        </recommendedName>
    </component>
</protein>
<dbReference type="EMBL" id="U64092">
    <property type="protein sequence ID" value="AAB05876.1"/>
    <property type="molecule type" value="mRNA"/>
</dbReference>
<dbReference type="EMBL" id="U64093">
    <property type="protein sequence ID" value="AAB05877.1"/>
    <property type="molecule type" value="mRNA"/>
</dbReference>
<dbReference type="SMR" id="Q29612"/>
<dbReference type="GlyCosmos" id="Q29612">
    <property type="glycosylation" value="5 sites, No reported glycans"/>
</dbReference>
<dbReference type="GO" id="GO:0005576">
    <property type="term" value="C:extracellular region"/>
    <property type="evidence" value="ECO:0007669"/>
    <property type="project" value="UniProtKB-SubCell"/>
</dbReference>
<dbReference type="GO" id="GO:0005886">
    <property type="term" value="C:plasma membrane"/>
    <property type="evidence" value="ECO:0007669"/>
    <property type="project" value="UniProtKB-SubCell"/>
</dbReference>
<dbReference type="GO" id="GO:0019966">
    <property type="term" value="F:interleukin-1 binding"/>
    <property type="evidence" value="ECO:0007669"/>
    <property type="project" value="TreeGrafter"/>
</dbReference>
<dbReference type="GO" id="GO:0004910">
    <property type="term" value="F:interleukin-1, type II, blocking receptor activity"/>
    <property type="evidence" value="ECO:0007669"/>
    <property type="project" value="InterPro"/>
</dbReference>
<dbReference type="CDD" id="cd05756">
    <property type="entry name" value="Ig1_IL1R_like"/>
    <property type="match status" value="1"/>
</dbReference>
<dbReference type="FunFam" id="2.60.40.10:FF:001027">
    <property type="entry name" value="Interleukin 1 receptor type 2"/>
    <property type="match status" value="1"/>
</dbReference>
<dbReference type="FunFam" id="2.60.40.10:FF:001326">
    <property type="entry name" value="Interleukin 1 receptor type 2"/>
    <property type="match status" value="1"/>
</dbReference>
<dbReference type="FunFam" id="2.60.40.10:FF:000188">
    <property type="entry name" value="Interleukin-1 receptor accessory protein-like 1"/>
    <property type="match status" value="1"/>
</dbReference>
<dbReference type="Gene3D" id="2.60.40.10">
    <property type="entry name" value="Immunoglobulins"/>
    <property type="match status" value="3"/>
</dbReference>
<dbReference type="InterPro" id="IPR007110">
    <property type="entry name" value="Ig-like_dom"/>
</dbReference>
<dbReference type="InterPro" id="IPR036179">
    <property type="entry name" value="Ig-like_dom_sf"/>
</dbReference>
<dbReference type="InterPro" id="IPR013783">
    <property type="entry name" value="Ig-like_fold"/>
</dbReference>
<dbReference type="InterPro" id="IPR003599">
    <property type="entry name" value="Ig_sub"/>
</dbReference>
<dbReference type="InterPro" id="IPR003598">
    <property type="entry name" value="Ig_sub2"/>
</dbReference>
<dbReference type="InterPro" id="IPR015621">
    <property type="entry name" value="IL-1_rcpt_fam"/>
</dbReference>
<dbReference type="InterPro" id="IPR004074">
    <property type="entry name" value="IL-1_rcpt_I/II-typ"/>
</dbReference>
<dbReference type="InterPro" id="IPR004077">
    <property type="entry name" value="IL-1_rcpt_II-typ"/>
</dbReference>
<dbReference type="InterPro" id="IPR013151">
    <property type="entry name" value="Immunoglobulin_dom"/>
</dbReference>
<dbReference type="PANTHER" id="PTHR11890">
    <property type="entry name" value="INTERLEUKIN-1 RECEPTOR FAMILY MEMBER"/>
    <property type="match status" value="1"/>
</dbReference>
<dbReference type="PANTHER" id="PTHR11890:SF3">
    <property type="entry name" value="INTERLEUKIN-1 RECEPTOR TYPE 2"/>
    <property type="match status" value="1"/>
</dbReference>
<dbReference type="Pfam" id="PF00047">
    <property type="entry name" value="ig"/>
    <property type="match status" value="1"/>
</dbReference>
<dbReference type="Pfam" id="PF13895">
    <property type="entry name" value="Ig_2"/>
    <property type="match status" value="1"/>
</dbReference>
<dbReference type="PRINTS" id="PR01539">
    <property type="entry name" value="INTRLEUKN1R2"/>
</dbReference>
<dbReference type="PRINTS" id="PR01536">
    <property type="entry name" value="INTRLKN1R12F"/>
</dbReference>
<dbReference type="SMART" id="SM00409">
    <property type="entry name" value="IG"/>
    <property type="match status" value="3"/>
</dbReference>
<dbReference type="SMART" id="SM00408">
    <property type="entry name" value="IGc2"/>
    <property type="match status" value="2"/>
</dbReference>
<dbReference type="SUPFAM" id="SSF48726">
    <property type="entry name" value="Immunoglobulin"/>
    <property type="match status" value="3"/>
</dbReference>
<dbReference type="PROSITE" id="PS50835">
    <property type="entry name" value="IG_LIKE"/>
    <property type="match status" value="3"/>
</dbReference>
<name>IL1R2_CHLAE</name>
<keyword id="KW-0025">Alternative splicing</keyword>
<keyword id="KW-1003">Cell membrane</keyword>
<keyword id="KW-0903">Direct protein sequencing</keyword>
<keyword id="KW-1015">Disulfide bond</keyword>
<keyword id="KW-0325">Glycoprotein</keyword>
<keyword id="KW-0393">Immunoglobulin domain</keyword>
<keyword id="KW-0472">Membrane</keyword>
<keyword id="KW-0675">Receptor</keyword>
<keyword id="KW-0677">Repeat</keyword>
<keyword id="KW-0964">Secreted</keyword>
<keyword id="KW-0732">Signal</keyword>
<keyword id="KW-0812">Transmembrane</keyword>
<keyword id="KW-1133">Transmembrane helix</keyword>
<comment type="function">
    <text evidence="1">Non-signaling receptor for IL1A, IL1B and IL1RN. Reduces IL1B activities. Serves as a decoy receptor by competitive binding to IL1B and preventing its binding to IL1R1. Also modulates cellular response through non-signaling association with IL1RAP after binding to IL1B. IL1R2 (membrane and secreted forms) preferentially binds IL1B and poorly IL1A and IL1RN. The secreted IL1R2 recruits secreted IL1RAP with high affinity; this complex formation may be the dominant mechanism for neutralization of IL1B by secreted/soluble receptors (By similarity).</text>
</comment>
<comment type="subunit">
    <text evidence="1">Forms a non-signaling receptor complex consisting of IL1R2 and IL1RAP.</text>
</comment>
<comment type="subcellular location">
    <molecule>Isoform Short</molecule>
    <subcellularLocation>
        <location>Secreted</location>
    </subcellularLocation>
</comment>
<comment type="subcellular location">
    <molecule>Isoform Long</molecule>
    <subcellularLocation>
        <location>Cell membrane</location>
        <topology>Single-pass type I membrane protein</topology>
    </subcellularLocation>
</comment>
<comment type="alternative products">
    <event type="alternative splicing"/>
    <isoform>
        <id>Q29612-1</id>
        <name>Long</name>
        <sequence type="displayed"/>
    </isoform>
    <isoform>
        <id>Q29612-2</id>
        <name>Short</name>
        <sequence type="described" ref="VSP_002663"/>
    </isoform>
</comment>
<comment type="PTM">
    <text evidence="1">A soluble form (sIL1R2) can also be produced by proteolytic cleavage at the cell surface (shedding) involving a metalloproteinase.</text>
</comment>
<comment type="similarity">
    <text evidence="5">Belongs to the interleukin-1 receptor family.</text>
</comment>
<organism>
    <name type="scientific">Chlorocebus aethiops</name>
    <name type="common">Green monkey</name>
    <name type="synonym">Cercopithecus aethiops</name>
    <dbReference type="NCBI Taxonomy" id="9534"/>
    <lineage>
        <taxon>Eukaryota</taxon>
        <taxon>Metazoa</taxon>
        <taxon>Chordata</taxon>
        <taxon>Craniata</taxon>
        <taxon>Vertebrata</taxon>
        <taxon>Euteleostomi</taxon>
        <taxon>Mammalia</taxon>
        <taxon>Eutheria</taxon>
        <taxon>Euarchontoglires</taxon>
        <taxon>Primates</taxon>
        <taxon>Haplorrhini</taxon>
        <taxon>Catarrhini</taxon>
        <taxon>Cercopithecidae</taxon>
        <taxon>Cercopithecinae</taxon>
        <taxon>Chlorocebus</taxon>
    </lineage>
</organism>
<sequence>MFRLYVLVMGVSAFTLQPAAHTGAARSCPVRGRHYKREFRLEGEPVALRCPQVPYQLWASVSPHINLTWHKNDSARMVPGEEETRMWAQDGALWLLPALQEDSGTYICTTRNASYCDKVSIELRVFENTDASLPFISYPQILTLSTFGVLVCPDLREFTRDKTDGKIQWYKDFLPLDKDNEKFLSVRGTTHLLVHDVALEDAGYYRCVLTFAHEGQQYNITRNIELRIKKKKEETIPVIISPLKTISASLGSRLTIPCKVFLGTGTPLTTMLWWTANDTHVESAYPGGRVTEGPRQEYSENNENYIEVPLIFDPVTRKDLNMVFKCFVRNTMGFQTLRTTVKEPPPTFSWGIVLAPLALAFLVLGGIWMHRRCKHRTGKADGLTVLRPHHQDF</sequence>
<evidence type="ECO:0000250" key="1"/>
<evidence type="ECO:0000255" key="2"/>
<evidence type="ECO:0000255" key="3">
    <source>
        <dbReference type="PROSITE-ProRule" id="PRU00114"/>
    </source>
</evidence>
<evidence type="ECO:0000303" key="4">
    <source>
    </source>
</evidence>
<evidence type="ECO:0000305" key="5"/>
<accession>Q29612</accession>
<proteinExistence type="evidence at protein level"/>